<reference key="1">
    <citation type="submission" date="2005-09" db="EMBL/GenBank/DDBJ databases">
        <authorList>
            <consortium name="NIH - Mammalian Gene Collection (MGC) project"/>
        </authorList>
    </citation>
    <scope>NUCLEOTIDE SEQUENCE [LARGE SCALE MRNA]</scope>
    <source>
        <strain>Crossbred X Angus</strain>
        <tissue>Ileum</tissue>
    </source>
</reference>
<organism>
    <name type="scientific">Bos taurus</name>
    <name type="common">Bovine</name>
    <dbReference type="NCBI Taxonomy" id="9913"/>
    <lineage>
        <taxon>Eukaryota</taxon>
        <taxon>Metazoa</taxon>
        <taxon>Chordata</taxon>
        <taxon>Craniata</taxon>
        <taxon>Vertebrata</taxon>
        <taxon>Euteleostomi</taxon>
        <taxon>Mammalia</taxon>
        <taxon>Eutheria</taxon>
        <taxon>Laurasiatheria</taxon>
        <taxon>Artiodactyla</taxon>
        <taxon>Ruminantia</taxon>
        <taxon>Pecora</taxon>
        <taxon>Bovidae</taxon>
        <taxon>Bovinae</taxon>
        <taxon>Bos</taxon>
    </lineage>
</organism>
<proteinExistence type="evidence at protein level"/>
<keyword id="KW-0002">3D-structure</keyword>
<keyword id="KW-0007">Acetylation</keyword>
<keyword id="KW-0649">Protein kinase inhibitor</keyword>
<keyword id="KW-1185">Reference proteome</keyword>
<evidence type="ECO:0000250" key="1"/>
<evidence type="ECO:0000250" key="2">
    <source>
        <dbReference type="UniProtKB" id="P61925"/>
    </source>
</evidence>
<evidence type="ECO:0000256" key="3">
    <source>
        <dbReference type="SAM" id="MobiDB-lite"/>
    </source>
</evidence>
<evidence type="ECO:0000305" key="4"/>
<evidence type="ECO:0007829" key="5">
    <source>
        <dbReference type="PDB" id="4C38"/>
    </source>
</evidence>
<protein>
    <recommendedName>
        <fullName>cAMP-dependent protein kinase inhibitor alpha</fullName>
        <shortName>PKI-alpha</shortName>
    </recommendedName>
</protein>
<sequence>MTDVETTYADFIASGRTGRRNAIHDILVSSASGNSNELALKLAGLDINKTEGEEDAQRNSTEQSGEAQGEAAKSES</sequence>
<feature type="initiator methionine" description="Removed" evidence="2">
    <location>
        <position position="1"/>
    </location>
</feature>
<feature type="chain" id="PRO_0000154531" description="cAMP-dependent protein kinase inhibitor alpha">
    <location>
        <begin position="2"/>
        <end position="76"/>
    </location>
</feature>
<feature type="region of interest" description="Disordered" evidence="3">
    <location>
        <begin position="49"/>
        <end position="76"/>
    </location>
</feature>
<feature type="site" description="Important for inhibition" evidence="1">
    <location>
        <position position="16"/>
    </location>
</feature>
<feature type="site" description="Important for inhibition" evidence="1">
    <location>
        <position position="19"/>
    </location>
</feature>
<feature type="site" description="Important for inhibition" evidence="1">
    <location>
        <position position="20"/>
    </location>
</feature>
<feature type="modified residue" description="N-acetylthreonine" evidence="2">
    <location>
        <position position="2"/>
    </location>
</feature>
<feature type="helix" evidence="5">
    <location>
        <begin position="7"/>
        <end position="12"/>
    </location>
</feature>
<accession>Q3SX13</accession>
<comment type="function">
    <text evidence="1">Extremely potent competitive inhibitor of cAMP-dependent protein kinase activity, this protein interacts with the catalytic subunit of the enzyme after the cAMP-induced dissociation of its regulatory chains.</text>
</comment>
<comment type="miscellaneous">
    <text evidence="1">The inhibitory site contains regions very similar to the hinge regions (sites that directly interact with the enzyme active site) and 'pseudosubstrate site' of the regulatory chains; but, unlike these chains, PKI does not contain cAMP-binding sites. The arginine residues within the inhibitory site are essential for inhibition and recognition of the enzyme active site (By similarity).</text>
</comment>
<comment type="similarity">
    <text evidence="4">Belongs to the PKI family.</text>
</comment>
<gene>
    <name type="primary">PKIA</name>
</gene>
<dbReference type="EMBL" id="BC104561">
    <property type="protein sequence ID" value="AAI04562.1"/>
    <property type="molecule type" value="mRNA"/>
</dbReference>
<dbReference type="RefSeq" id="NP_001032709.1">
    <property type="nucleotide sequence ID" value="NM_001037620.2"/>
</dbReference>
<dbReference type="RefSeq" id="NP_001346928.1">
    <property type="nucleotide sequence ID" value="NM_001359999.1"/>
</dbReference>
<dbReference type="PDB" id="2GNJ">
    <property type="method" value="X-ray"/>
    <property type="resolution" value="2.28 A"/>
    <property type="chains" value="I=6-25"/>
</dbReference>
<dbReference type="PDB" id="2UZT">
    <property type="method" value="X-ray"/>
    <property type="resolution" value="2.10 A"/>
    <property type="chains" value="B=6-25"/>
</dbReference>
<dbReference type="PDB" id="2UZU">
    <property type="method" value="X-ray"/>
    <property type="resolution" value="2.40 A"/>
    <property type="chains" value="I=6-25"/>
</dbReference>
<dbReference type="PDB" id="2UZV">
    <property type="method" value="X-ray"/>
    <property type="resolution" value="2.50 A"/>
    <property type="chains" value="2=6-25"/>
</dbReference>
<dbReference type="PDB" id="2UZW">
    <property type="method" value="X-ray"/>
    <property type="resolution" value="2.20 A"/>
    <property type="chains" value="I=6-25"/>
</dbReference>
<dbReference type="PDB" id="3E8C">
    <property type="method" value="X-ray"/>
    <property type="resolution" value="2.20 A"/>
    <property type="chains" value="G/H/I/J/K/L=6-25"/>
</dbReference>
<dbReference type="PDB" id="3E8E">
    <property type="method" value="X-ray"/>
    <property type="resolution" value="2.00 A"/>
    <property type="chains" value="C/F/G/J/N/Q=6-25"/>
</dbReference>
<dbReference type="PDB" id="3ZO1">
    <property type="method" value="X-ray"/>
    <property type="resolution" value="2.00 A"/>
    <property type="chains" value="I=6-23"/>
</dbReference>
<dbReference type="PDB" id="3ZO2">
    <property type="method" value="X-ray"/>
    <property type="resolution" value="1.98 A"/>
    <property type="chains" value="I=6-25"/>
</dbReference>
<dbReference type="PDB" id="3ZO3">
    <property type="method" value="X-ray"/>
    <property type="resolution" value="2.10 A"/>
    <property type="chains" value="I=6-23"/>
</dbReference>
<dbReference type="PDB" id="3ZO4">
    <property type="method" value="X-ray"/>
    <property type="resolution" value="1.65 A"/>
    <property type="chains" value="I=6-25"/>
</dbReference>
<dbReference type="PDB" id="4C33">
    <property type="method" value="X-ray"/>
    <property type="resolution" value="1.70 A"/>
    <property type="chains" value="I=6-23"/>
</dbReference>
<dbReference type="PDB" id="4C34">
    <property type="method" value="X-ray"/>
    <property type="resolution" value="1.78 A"/>
    <property type="chains" value="I=6-23"/>
</dbReference>
<dbReference type="PDB" id="4C35">
    <property type="method" value="X-ray"/>
    <property type="resolution" value="2.19 A"/>
    <property type="chains" value="I=6-23"/>
</dbReference>
<dbReference type="PDB" id="4C36">
    <property type="method" value="X-ray"/>
    <property type="resolution" value="1.98 A"/>
    <property type="chains" value="I=6-25"/>
</dbReference>
<dbReference type="PDB" id="4C37">
    <property type="method" value="X-ray"/>
    <property type="resolution" value="1.70 A"/>
    <property type="chains" value="I=6-25"/>
</dbReference>
<dbReference type="PDB" id="4C38">
    <property type="method" value="X-ray"/>
    <property type="resolution" value="1.58 A"/>
    <property type="chains" value="I=6-25"/>
</dbReference>
<dbReference type="PDB" id="4YXR">
    <property type="method" value="X-ray"/>
    <property type="resolution" value="2.00 A"/>
    <property type="chains" value="I=6-25"/>
</dbReference>
<dbReference type="PDB" id="5VHB">
    <property type="method" value="X-ray"/>
    <property type="resolution" value="1.61 A"/>
    <property type="chains" value="B=6-23"/>
</dbReference>
<dbReference type="PDB" id="5VI9">
    <property type="method" value="X-ray"/>
    <property type="resolution" value="1.95 A"/>
    <property type="chains" value="B=6-23"/>
</dbReference>
<dbReference type="PDB" id="5VIB">
    <property type="method" value="X-ray"/>
    <property type="resolution" value="2.37 A"/>
    <property type="chains" value="B=6-23"/>
</dbReference>
<dbReference type="PDB" id="8SF8">
    <property type="method" value="X-ray"/>
    <property type="resolution" value="1.70 A"/>
    <property type="chains" value="B=6-25"/>
</dbReference>
<dbReference type="PDBsum" id="2GNJ"/>
<dbReference type="PDBsum" id="2UZT"/>
<dbReference type="PDBsum" id="2UZU"/>
<dbReference type="PDBsum" id="2UZV"/>
<dbReference type="PDBsum" id="2UZW"/>
<dbReference type="PDBsum" id="3E8C"/>
<dbReference type="PDBsum" id="3E8E"/>
<dbReference type="PDBsum" id="3ZO1"/>
<dbReference type="PDBsum" id="3ZO2"/>
<dbReference type="PDBsum" id="3ZO3"/>
<dbReference type="PDBsum" id="3ZO4"/>
<dbReference type="PDBsum" id="4C33"/>
<dbReference type="PDBsum" id="4C34"/>
<dbReference type="PDBsum" id="4C35"/>
<dbReference type="PDBsum" id="4C36"/>
<dbReference type="PDBsum" id="4C37"/>
<dbReference type="PDBsum" id="4C38"/>
<dbReference type="PDBsum" id="4YXR"/>
<dbReference type="PDBsum" id="5VHB"/>
<dbReference type="PDBsum" id="5VI9"/>
<dbReference type="PDBsum" id="5VIB"/>
<dbReference type="PDBsum" id="8SF8"/>
<dbReference type="BMRB" id="Q3SX13"/>
<dbReference type="SMR" id="Q3SX13"/>
<dbReference type="FunCoup" id="Q3SX13">
    <property type="interactions" value="400"/>
</dbReference>
<dbReference type="STRING" id="9913.ENSBTAP00000010711"/>
<dbReference type="PaxDb" id="9913-ENSBTAP00000010711"/>
<dbReference type="Ensembl" id="ENSBTAT00000074880.1">
    <property type="protein sequence ID" value="ENSBTAP00000068262.1"/>
    <property type="gene ID" value="ENSBTAG00000008150.6"/>
</dbReference>
<dbReference type="GeneID" id="613524"/>
<dbReference type="KEGG" id="bta:613524"/>
<dbReference type="CTD" id="5569"/>
<dbReference type="VEuPathDB" id="HostDB:ENSBTAG00000008150"/>
<dbReference type="VGNC" id="VGNC:32940">
    <property type="gene designation" value="PKIA"/>
</dbReference>
<dbReference type="eggNOG" id="ENOG502S6JP">
    <property type="taxonomic scope" value="Eukaryota"/>
</dbReference>
<dbReference type="GeneTree" id="ENSGT00530000064276"/>
<dbReference type="HOGENOM" id="CLU_163471_2_0_1"/>
<dbReference type="InParanoid" id="Q3SX13"/>
<dbReference type="OrthoDB" id="9934738at2759"/>
<dbReference type="TreeFam" id="TF330809"/>
<dbReference type="Proteomes" id="UP000009136">
    <property type="component" value="Chromosome 14"/>
</dbReference>
<dbReference type="Bgee" id="ENSBTAG00000008150">
    <property type="expression patterns" value="Expressed in gluteus medius and 102 other cell types or tissues"/>
</dbReference>
<dbReference type="GO" id="GO:0005737">
    <property type="term" value="C:cytoplasm"/>
    <property type="evidence" value="ECO:0000318"/>
    <property type="project" value="GO_Central"/>
</dbReference>
<dbReference type="GO" id="GO:0005634">
    <property type="term" value="C:nucleus"/>
    <property type="evidence" value="ECO:0000318"/>
    <property type="project" value="GO_Central"/>
</dbReference>
<dbReference type="GO" id="GO:0004862">
    <property type="term" value="F:cAMP-dependent protein kinase inhibitor activity"/>
    <property type="evidence" value="ECO:0000318"/>
    <property type="project" value="GO_Central"/>
</dbReference>
<dbReference type="InterPro" id="IPR004171">
    <property type="entry name" value="cAMP_dep_PKI"/>
</dbReference>
<dbReference type="PANTHER" id="PTHR15416">
    <property type="entry name" value="CAMP-DEPENDENT PROTEIN KINASE INHIBITOR/PKI"/>
    <property type="match status" value="1"/>
</dbReference>
<dbReference type="Pfam" id="PF02827">
    <property type="entry name" value="PKI"/>
    <property type="match status" value="1"/>
</dbReference>
<dbReference type="PIRSF" id="PIRSF001667">
    <property type="entry name" value="PKI"/>
    <property type="match status" value="1"/>
</dbReference>
<name>IPKA_BOVIN</name>